<dbReference type="EC" id="7.1.1.2"/>
<dbReference type="EMBL" id="AF155828">
    <property type="protein sequence ID" value="AAD43330.1"/>
    <property type="molecule type" value="Genomic_DNA"/>
</dbReference>
<dbReference type="EMBL" id="AB000109">
    <property type="protein sequence ID" value="BAA78087.1"/>
    <property type="molecule type" value="Genomic_DNA"/>
</dbReference>
<dbReference type="EMBL" id="U02291">
    <property type="protein sequence ID" value="AAA77668.1"/>
    <property type="molecule type" value="Genomic_DNA"/>
</dbReference>
<dbReference type="PIR" id="T43784">
    <property type="entry name" value="T43784"/>
</dbReference>
<dbReference type="RefSeq" id="NP_050105.1">
    <property type="nucleotide sequence ID" value="NC_000895.1"/>
</dbReference>
<dbReference type="SMR" id="Q34313"/>
<dbReference type="FunCoup" id="Q34313">
    <property type="interactions" value="22"/>
</dbReference>
<dbReference type="STRING" id="44689.Q34313"/>
<dbReference type="GlyGen" id="Q34313">
    <property type="glycosylation" value="1 site"/>
</dbReference>
<dbReference type="GeneID" id="2193930"/>
<dbReference type="KEGG" id="ddi:DidioMp38"/>
<dbReference type="dictyBase" id="DDB_G0294026">
    <property type="gene designation" value="nad5"/>
</dbReference>
<dbReference type="VEuPathDB" id="AmoebaDB:DidioMp38"/>
<dbReference type="InParanoid" id="Q34313"/>
<dbReference type="OMA" id="LIGFWQH"/>
<dbReference type="PhylomeDB" id="Q34313"/>
<dbReference type="PRO" id="PR:Q34313"/>
<dbReference type="Proteomes" id="UP000002195">
    <property type="component" value="Mitochondrion"/>
</dbReference>
<dbReference type="GO" id="GO:0005743">
    <property type="term" value="C:mitochondrial inner membrane"/>
    <property type="evidence" value="ECO:0007669"/>
    <property type="project" value="UniProtKB-SubCell"/>
</dbReference>
<dbReference type="GO" id="GO:0045271">
    <property type="term" value="C:respiratory chain complex I"/>
    <property type="evidence" value="ECO:0000318"/>
    <property type="project" value="GO_Central"/>
</dbReference>
<dbReference type="GO" id="GO:0008137">
    <property type="term" value="F:NADH dehydrogenase (ubiquinone) activity"/>
    <property type="evidence" value="ECO:0007669"/>
    <property type="project" value="UniProtKB-EC"/>
</dbReference>
<dbReference type="GO" id="GO:0042773">
    <property type="term" value="P:ATP synthesis coupled electron transport"/>
    <property type="evidence" value="ECO:0007669"/>
    <property type="project" value="InterPro"/>
</dbReference>
<dbReference type="GO" id="GO:0015990">
    <property type="term" value="P:electron transport coupled proton transport"/>
    <property type="evidence" value="ECO:0000318"/>
    <property type="project" value="GO_Central"/>
</dbReference>
<dbReference type="InterPro" id="IPR010934">
    <property type="entry name" value="NADH_DH_su5_C"/>
</dbReference>
<dbReference type="InterPro" id="IPR018393">
    <property type="entry name" value="NADHpl_OxRdtase_5_subgr"/>
</dbReference>
<dbReference type="InterPro" id="IPR001750">
    <property type="entry name" value="ND/Mrp_TM"/>
</dbReference>
<dbReference type="InterPro" id="IPR003945">
    <property type="entry name" value="NU5C-like"/>
</dbReference>
<dbReference type="InterPro" id="IPR001516">
    <property type="entry name" value="Proton_antipo_N"/>
</dbReference>
<dbReference type="NCBIfam" id="TIGR01974">
    <property type="entry name" value="NDH_I_L"/>
    <property type="match status" value="1"/>
</dbReference>
<dbReference type="NCBIfam" id="NF005141">
    <property type="entry name" value="PRK06590.1"/>
    <property type="match status" value="1"/>
</dbReference>
<dbReference type="PANTHER" id="PTHR42829">
    <property type="entry name" value="NADH-UBIQUINONE OXIDOREDUCTASE CHAIN 5"/>
    <property type="match status" value="1"/>
</dbReference>
<dbReference type="PANTHER" id="PTHR42829:SF2">
    <property type="entry name" value="NADH-UBIQUINONE OXIDOREDUCTASE CHAIN 5"/>
    <property type="match status" value="1"/>
</dbReference>
<dbReference type="Pfam" id="PF06455">
    <property type="entry name" value="NADH5_C"/>
    <property type="match status" value="1"/>
</dbReference>
<dbReference type="Pfam" id="PF00361">
    <property type="entry name" value="Proton_antipo_M"/>
    <property type="match status" value="1"/>
</dbReference>
<dbReference type="Pfam" id="PF00662">
    <property type="entry name" value="Proton_antipo_N"/>
    <property type="match status" value="1"/>
</dbReference>
<dbReference type="PRINTS" id="PR01434">
    <property type="entry name" value="NADHDHGNASE5"/>
</dbReference>
<dbReference type="PRINTS" id="PR01435">
    <property type="entry name" value="NPOXDRDTASE5"/>
</dbReference>
<keyword id="KW-0249">Electron transport</keyword>
<keyword id="KW-0472">Membrane</keyword>
<keyword id="KW-0496">Mitochondrion</keyword>
<keyword id="KW-0999">Mitochondrion inner membrane</keyword>
<keyword id="KW-0520">NAD</keyword>
<keyword id="KW-1185">Reference proteome</keyword>
<keyword id="KW-0679">Respiratory chain</keyword>
<keyword id="KW-1278">Translocase</keyword>
<keyword id="KW-0812">Transmembrane</keyword>
<keyword id="KW-1133">Transmembrane helix</keyword>
<keyword id="KW-0813">Transport</keyword>
<keyword id="KW-0830">Ubiquinone</keyword>
<accession>Q34313</accession>
<accession>Q9T447</accession>
<protein>
    <recommendedName>
        <fullName>NADH-ubiquinone oxidoreductase chain 5</fullName>
        <ecNumber>7.1.1.2</ecNumber>
    </recommendedName>
    <alternativeName>
        <fullName>NADH dehydrogenase subunit 5</fullName>
    </alternativeName>
</protein>
<organism>
    <name type="scientific">Dictyostelium discoideum</name>
    <name type="common">Social amoeba</name>
    <dbReference type="NCBI Taxonomy" id="44689"/>
    <lineage>
        <taxon>Eukaryota</taxon>
        <taxon>Amoebozoa</taxon>
        <taxon>Evosea</taxon>
        <taxon>Eumycetozoa</taxon>
        <taxon>Dictyostelia</taxon>
        <taxon>Dictyosteliales</taxon>
        <taxon>Dictyosteliaceae</taxon>
        <taxon>Dictyostelium</taxon>
    </lineage>
</organism>
<feature type="chain" id="PRO_0000118087" description="NADH-ubiquinone oxidoreductase chain 5">
    <location>
        <begin position="1"/>
        <end position="670"/>
    </location>
</feature>
<feature type="transmembrane region" description="Helical" evidence="2">
    <location>
        <begin position="1"/>
        <end position="21"/>
    </location>
</feature>
<feature type="transmembrane region" description="Helical" evidence="2">
    <location>
        <begin position="31"/>
        <end position="51"/>
    </location>
</feature>
<feature type="transmembrane region" description="Helical" evidence="2">
    <location>
        <begin position="81"/>
        <end position="101"/>
    </location>
</feature>
<feature type="transmembrane region" description="Helical" evidence="2">
    <location>
        <begin position="111"/>
        <end position="131"/>
    </location>
</feature>
<feature type="transmembrane region" description="Helical" evidence="2">
    <location>
        <begin position="133"/>
        <end position="153"/>
    </location>
</feature>
<feature type="transmembrane region" description="Helical" evidence="2">
    <location>
        <begin position="178"/>
        <end position="198"/>
    </location>
</feature>
<feature type="transmembrane region" description="Helical" evidence="2">
    <location>
        <begin position="211"/>
        <end position="231"/>
    </location>
</feature>
<feature type="transmembrane region" description="Helical" evidence="2">
    <location>
        <begin position="251"/>
        <end position="271"/>
    </location>
</feature>
<feature type="transmembrane region" description="Helical" evidence="2">
    <location>
        <begin position="283"/>
        <end position="303"/>
    </location>
</feature>
<feature type="transmembrane region" description="Helical" evidence="2">
    <location>
        <begin position="311"/>
        <end position="331"/>
    </location>
</feature>
<feature type="transmembrane region" description="Helical" evidence="2">
    <location>
        <begin position="339"/>
        <end position="359"/>
    </location>
</feature>
<feature type="transmembrane region" description="Helical" evidence="2">
    <location>
        <begin position="375"/>
        <end position="395"/>
    </location>
</feature>
<feature type="transmembrane region" description="Helical" evidence="2">
    <location>
        <begin position="421"/>
        <end position="441"/>
    </location>
</feature>
<feature type="transmembrane region" description="Helical" evidence="2">
    <location>
        <begin position="462"/>
        <end position="482"/>
    </location>
</feature>
<feature type="transmembrane region" description="Helical" evidence="2">
    <location>
        <begin position="519"/>
        <end position="539"/>
    </location>
</feature>
<feature type="transmembrane region" description="Helical" evidence="2">
    <location>
        <begin position="566"/>
        <end position="586"/>
    </location>
</feature>
<feature type="transmembrane region" description="Helical" evidence="2">
    <location>
        <begin position="594"/>
        <end position="614"/>
    </location>
</feature>
<feature type="transmembrane region" description="Helical" evidence="2">
    <location>
        <begin position="629"/>
        <end position="649"/>
    </location>
</feature>
<feature type="transmembrane region" description="Helical" evidence="2">
    <location>
        <begin position="650"/>
        <end position="670"/>
    </location>
</feature>
<proteinExistence type="inferred from homology"/>
<sequence>MYIVNLILPLIGSIITGIFGHKLGNRISIKIAVGCMMLTAISSLYIGYEILLCNSVVHFKLGTWMQVGSLNVEYGLLYDSLTSIMIIVITCISSMVHLYSMDYMKEDPHKTRFFSYLSLFTFFMMLLVTADNFVQLFFGWEGVGIMSYLLINFWYTRLQANKSALKAVILNRFGDFGLFFGILLVFLVFKSVDFSVIFTIAPFITEYTINLLGYEVNAITLIGSFIVIGVVGKSAQLGLHMWLPDAMEGPTPVSALLHAATMVTAGVFLVLRTSPLLSYSITILNILTIIGALTTLFATTIGIVQNDIKRVIAYSTCSQLGYMIFACGLLNYNASIYHLTTHAFFKALLFLSAGSVIHGLNDEQDMRKMGGLVNLMPLTYQCMLIGTLALTGFPFLSGYYSKDIILETSYATYYWEGTFAAIIGYVAAFGTTFYSFRLLILTFFNKPRMQYKTIAGVHEASTNMVIPLVILALCSIFIGYVTKDFFVGLGTPVWNNSFFAYPYNNLILESEVLQRELKLLPLFAFIYGVITPVLFYFNIKEDRMINVKQNLMVKESYFFFVKKWYFDFLSRVLIVVPFFHLSYDVMNKNLDKGLWEKIGVTGVATTLVTAFTALKLKNEITLSTYISYIVQTIILIIVVGIFSFMTGFIYMELCIIIGILYICLPSIKID</sequence>
<evidence type="ECO:0000250" key="1"/>
<evidence type="ECO:0000255" key="2"/>
<evidence type="ECO:0000305" key="3"/>
<comment type="function">
    <text evidence="1">Core subunit of the mitochondrial membrane respiratory chain NADH dehydrogenase (Complex I) that is believed to belong to the minimal assembly required for catalysis. Complex I functions in the transfer of electrons from NADH to the respiratory chain. The immediate electron acceptor for the enzyme is believed to be ubiquinone (By similarity).</text>
</comment>
<comment type="catalytic activity">
    <reaction>
        <text>a ubiquinone + NADH + 5 H(+)(in) = a ubiquinol + NAD(+) + 4 H(+)(out)</text>
        <dbReference type="Rhea" id="RHEA:29091"/>
        <dbReference type="Rhea" id="RHEA-COMP:9565"/>
        <dbReference type="Rhea" id="RHEA-COMP:9566"/>
        <dbReference type="ChEBI" id="CHEBI:15378"/>
        <dbReference type="ChEBI" id="CHEBI:16389"/>
        <dbReference type="ChEBI" id="CHEBI:17976"/>
        <dbReference type="ChEBI" id="CHEBI:57540"/>
        <dbReference type="ChEBI" id="CHEBI:57945"/>
        <dbReference type="EC" id="7.1.1.2"/>
    </reaction>
</comment>
<comment type="subcellular location">
    <subcellularLocation>
        <location evidence="1">Mitochondrion inner membrane</location>
        <topology evidence="1">Multi-pass membrane protein</topology>
    </subcellularLocation>
</comment>
<comment type="similarity">
    <text evidence="3">Belongs to the complex I subunit 5 family.</text>
</comment>
<reference key="1">
    <citation type="submission" date="1999-06" db="EMBL/GenBank/DDBJ databases">
        <title>The Dictyostelium genome project: complete annotation of the mitochondrial DNA.</title>
        <authorList>
            <person name="Sucgang R."/>
            <person name="Muzny D."/>
            <person name="Gibbs R."/>
            <person name="Kuspa A."/>
        </authorList>
    </citation>
    <scope>NUCLEOTIDE SEQUENCE [GENOMIC DNA]</scope>
    <source>
        <strain>AX4</strain>
    </source>
</reference>
<reference key="2">
    <citation type="journal article" date="2000" name="Mol. Gen. Genet.">
        <title>The mitochondrial DNA of Dictyostelium discoideum: complete sequence, gene content and genome organization.</title>
        <authorList>
            <person name="Ogawa S."/>
            <person name="Yoshino R."/>
            <person name="Angata K."/>
            <person name="Iwamoto M."/>
            <person name="Pi M."/>
            <person name="Kuroe K."/>
            <person name="Matsuo K."/>
            <person name="Morio T."/>
            <person name="Urushihara H."/>
            <person name="Yanagisawa K."/>
            <person name="Tanaka Y."/>
        </authorList>
    </citation>
    <scope>NUCLEOTIDE SEQUENCE [LARGE SCALE GENOMIC DNA]</scope>
    <source>
        <strain>AX3</strain>
    </source>
</reference>
<reference key="3">
    <citation type="journal article" date="1994" name="J. Mol. Evol.">
        <title>The Dictyostelium discoideum mitochondrial genome: a primordial system using the universal code and encoding hydrophilic proteins atypical of metazoan mitochondrial DNA.</title>
        <authorList>
            <person name="Cole R.A."/>
            <person name="Williams K.L."/>
        </authorList>
    </citation>
    <scope>NUCLEOTIDE SEQUENCE [GENOMIC DNA] OF 1-232</scope>
    <source>
        <strain>X22</strain>
    </source>
</reference>
<gene>
    <name type="primary">nad5</name>
    <name type="ORF">DDB_G0294026</name>
</gene>
<name>NU5M_DICDI</name>
<geneLocation type="mitochondrion"/>